<evidence type="ECO:0000255" key="1">
    <source>
        <dbReference type="HAMAP-Rule" id="MF_01959"/>
    </source>
</evidence>
<protein>
    <recommendedName>
        <fullName evidence="1">Cytochrome c-type biogenesis protein CcmE</fullName>
    </recommendedName>
    <alternativeName>
        <fullName evidence="1">Cytochrome c maturation protein E</fullName>
    </alternativeName>
    <alternativeName>
        <fullName evidence="1">Heme chaperone CcmE</fullName>
    </alternativeName>
</protein>
<proteinExistence type="inferred from homology"/>
<name>CCME_PARDP</name>
<keyword id="KW-0997">Cell inner membrane</keyword>
<keyword id="KW-1003">Cell membrane</keyword>
<keyword id="KW-0201">Cytochrome c-type biogenesis</keyword>
<keyword id="KW-0349">Heme</keyword>
<keyword id="KW-0408">Iron</keyword>
<keyword id="KW-0472">Membrane</keyword>
<keyword id="KW-0479">Metal-binding</keyword>
<keyword id="KW-1185">Reference proteome</keyword>
<keyword id="KW-0735">Signal-anchor</keyword>
<keyword id="KW-0812">Transmembrane</keyword>
<keyword id="KW-1133">Transmembrane helix</keyword>
<reference key="1">
    <citation type="submission" date="2006-12" db="EMBL/GenBank/DDBJ databases">
        <title>Complete sequence of chromosome 2 of Paracoccus denitrificans PD1222.</title>
        <authorList>
            <person name="Copeland A."/>
            <person name="Lucas S."/>
            <person name="Lapidus A."/>
            <person name="Barry K."/>
            <person name="Detter J.C."/>
            <person name="Glavina del Rio T."/>
            <person name="Hammon N."/>
            <person name="Israni S."/>
            <person name="Dalin E."/>
            <person name="Tice H."/>
            <person name="Pitluck S."/>
            <person name="Munk A.C."/>
            <person name="Brettin T."/>
            <person name="Bruce D."/>
            <person name="Han C."/>
            <person name="Tapia R."/>
            <person name="Gilna P."/>
            <person name="Schmutz J."/>
            <person name="Larimer F."/>
            <person name="Land M."/>
            <person name="Hauser L."/>
            <person name="Kyrpides N."/>
            <person name="Lykidis A."/>
            <person name="Spiro S."/>
            <person name="Richardson D.J."/>
            <person name="Moir J.W.B."/>
            <person name="Ferguson S.J."/>
            <person name="van Spanning R.J.M."/>
            <person name="Richardson P."/>
        </authorList>
    </citation>
    <scope>NUCLEOTIDE SEQUENCE [LARGE SCALE GENOMIC DNA]</scope>
    <source>
        <strain>Pd 1222</strain>
    </source>
</reference>
<organism>
    <name type="scientific">Paracoccus denitrificans (strain Pd 1222)</name>
    <dbReference type="NCBI Taxonomy" id="318586"/>
    <lineage>
        <taxon>Bacteria</taxon>
        <taxon>Pseudomonadati</taxon>
        <taxon>Pseudomonadota</taxon>
        <taxon>Alphaproteobacteria</taxon>
        <taxon>Rhodobacterales</taxon>
        <taxon>Paracoccaceae</taxon>
        <taxon>Paracoccus</taxon>
    </lineage>
</organism>
<feature type="chain" id="PRO_1000070827" description="Cytochrome c-type biogenesis protein CcmE">
    <location>
        <begin position="1"/>
        <end position="147"/>
    </location>
</feature>
<feature type="topological domain" description="Cytoplasmic" evidence="1">
    <location>
        <begin position="1"/>
        <end position="9"/>
    </location>
</feature>
<feature type="transmembrane region" description="Helical; Signal-anchor for type II membrane protein" evidence="1">
    <location>
        <begin position="10"/>
        <end position="30"/>
    </location>
</feature>
<feature type="topological domain" description="Periplasmic" evidence="1">
    <location>
        <begin position="31"/>
        <end position="147"/>
    </location>
</feature>
<feature type="binding site" description="covalent" evidence="1">
    <location>
        <position position="123"/>
    </location>
    <ligand>
        <name>heme</name>
        <dbReference type="ChEBI" id="CHEBI:30413"/>
    </ligand>
</feature>
<feature type="binding site" description="axial binding residue" evidence="1">
    <location>
        <position position="127"/>
    </location>
    <ligand>
        <name>heme</name>
        <dbReference type="ChEBI" id="CHEBI:30413"/>
    </ligand>
    <ligandPart>
        <name>Fe</name>
        <dbReference type="ChEBI" id="CHEBI:18248"/>
    </ligandPart>
</feature>
<sequence>MKSLKKKRRIQILVAAAVALVLAVGLIGYGFRDGINLYRSPSQMAENPPEAGEVFRLGGLVEDGSLVRGASETVTFRVTDGGATVPVRFTGVLPDLFSEGQGMIGTGRMEGETFVASEILAKHDENYMPREVMDSLKEQGVYQEPNS</sequence>
<accession>A1B946</accession>
<comment type="function">
    <text evidence="1">Heme chaperone required for the biogenesis of c-type cytochromes. Transiently binds heme delivered by CcmC and transfers the heme to apo-cytochromes in a process facilitated by CcmF and CcmH.</text>
</comment>
<comment type="subcellular location">
    <subcellularLocation>
        <location evidence="1">Cell inner membrane</location>
        <topology evidence="1">Single-pass type II membrane protein</topology>
        <orientation evidence="1">Periplasmic side</orientation>
    </subcellularLocation>
</comment>
<comment type="similarity">
    <text evidence="1">Belongs to the CcmE/CycJ family.</text>
</comment>
<dbReference type="EMBL" id="CP000490">
    <property type="protein sequence ID" value="ABL72040.1"/>
    <property type="molecule type" value="Genomic_DNA"/>
</dbReference>
<dbReference type="RefSeq" id="WP_011750208.1">
    <property type="nucleotide sequence ID" value="NC_008687.1"/>
</dbReference>
<dbReference type="SMR" id="A1B946"/>
<dbReference type="STRING" id="318586.Pden_3974"/>
<dbReference type="EnsemblBacteria" id="ABL72040">
    <property type="protein sequence ID" value="ABL72040"/>
    <property type="gene ID" value="Pden_3974"/>
</dbReference>
<dbReference type="GeneID" id="93453635"/>
<dbReference type="KEGG" id="pde:Pden_3974"/>
<dbReference type="eggNOG" id="COG2332">
    <property type="taxonomic scope" value="Bacteria"/>
</dbReference>
<dbReference type="HOGENOM" id="CLU_079503_1_1_5"/>
<dbReference type="OrthoDB" id="9793584at2"/>
<dbReference type="Proteomes" id="UP000000361">
    <property type="component" value="Chromosome 2"/>
</dbReference>
<dbReference type="GO" id="GO:0005886">
    <property type="term" value="C:plasma membrane"/>
    <property type="evidence" value="ECO:0007669"/>
    <property type="project" value="UniProtKB-SubCell"/>
</dbReference>
<dbReference type="GO" id="GO:0020037">
    <property type="term" value="F:heme binding"/>
    <property type="evidence" value="ECO:0007669"/>
    <property type="project" value="InterPro"/>
</dbReference>
<dbReference type="GO" id="GO:0046872">
    <property type="term" value="F:metal ion binding"/>
    <property type="evidence" value="ECO:0007669"/>
    <property type="project" value="UniProtKB-KW"/>
</dbReference>
<dbReference type="GO" id="GO:0017004">
    <property type="term" value="P:cytochrome complex assembly"/>
    <property type="evidence" value="ECO:0007669"/>
    <property type="project" value="UniProtKB-KW"/>
</dbReference>
<dbReference type="Gene3D" id="2.40.50.140">
    <property type="entry name" value="Nucleic acid-binding proteins"/>
    <property type="match status" value="1"/>
</dbReference>
<dbReference type="HAMAP" id="MF_01959">
    <property type="entry name" value="CcmE"/>
    <property type="match status" value="1"/>
</dbReference>
<dbReference type="InterPro" id="IPR004329">
    <property type="entry name" value="CcmE"/>
</dbReference>
<dbReference type="InterPro" id="IPR036127">
    <property type="entry name" value="CcmE-like_sf"/>
</dbReference>
<dbReference type="InterPro" id="IPR012340">
    <property type="entry name" value="NA-bd_OB-fold"/>
</dbReference>
<dbReference type="NCBIfam" id="NF009727">
    <property type="entry name" value="PRK13254.1-1"/>
    <property type="match status" value="1"/>
</dbReference>
<dbReference type="NCBIfam" id="NF009731">
    <property type="entry name" value="PRK13254.1-5"/>
    <property type="match status" value="1"/>
</dbReference>
<dbReference type="PANTHER" id="PTHR34128">
    <property type="entry name" value="CYTOCHROME C-TYPE BIOGENESIS PROTEIN CCME HOMOLOG, MITOCHONDRIAL"/>
    <property type="match status" value="1"/>
</dbReference>
<dbReference type="PANTHER" id="PTHR34128:SF2">
    <property type="entry name" value="CYTOCHROME C-TYPE BIOGENESIS PROTEIN CCME HOMOLOG, MITOCHONDRIAL"/>
    <property type="match status" value="1"/>
</dbReference>
<dbReference type="Pfam" id="PF03100">
    <property type="entry name" value="CcmE"/>
    <property type="match status" value="1"/>
</dbReference>
<dbReference type="SUPFAM" id="SSF82093">
    <property type="entry name" value="Heme chaperone CcmE"/>
    <property type="match status" value="1"/>
</dbReference>
<gene>
    <name evidence="1" type="primary">ccmE</name>
    <name evidence="1" type="synonym">cycJ</name>
    <name type="ordered locus">Pden_3974</name>
</gene>